<proteinExistence type="inferred from homology"/>
<gene>
    <name evidence="1" type="primary">yidC</name>
    <name type="ordered locus">VS_0003</name>
</gene>
<accession>B7VGH7</accession>
<dbReference type="EMBL" id="FM954972">
    <property type="protein sequence ID" value="CAV17060.1"/>
    <property type="molecule type" value="Genomic_DNA"/>
</dbReference>
<dbReference type="SMR" id="B7VGH7"/>
<dbReference type="STRING" id="575788.VS_0003"/>
<dbReference type="KEGG" id="vsp:VS_0003"/>
<dbReference type="eggNOG" id="COG0706">
    <property type="taxonomic scope" value="Bacteria"/>
</dbReference>
<dbReference type="HOGENOM" id="CLU_016535_3_0_6"/>
<dbReference type="Proteomes" id="UP000009100">
    <property type="component" value="Chromosome 1"/>
</dbReference>
<dbReference type="GO" id="GO:0005886">
    <property type="term" value="C:plasma membrane"/>
    <property type="evidence" value="ECO:0007669"/>
    <property type="project" value="UniProtKB-SubCell"/>
</dbReference>
<dbReference type="GO" id="GO:0032977">
    <property type="term" value="F:membrane insertase activity"/>
    <property type="evidence" value="ECO:0007669"/>
    <property type="project" value="InterPro"/>
</dbReference>
<dbReference type="GO" id="GO:0051205">
    <property type="term" value="P:protein insertion into membrane"/>
    <property type="evidence" value="ECO:0007669"/>
    <property type="project" value="TreeGrafter"/>
</dbReference>
<dbReference type="GO" id="GO:0015031">
    <property type="term" value="P:protein transport"/>
    <property type="evidence" value="ECO:0007669"/>
    <property type="project" value="UniProtKB-KW"/>
</dbReference>
<dbReference type="CDD" id="cd20070">
    <property type="entry name" value="5TM_YidC_Alb3"/>
    <property type="match status" value="1"/>
</dbReference>
<dbReference type="CDD" id="cd19961">
    <property type="entry name" value="EcYidC-like_peri"/>
    <property type="match status" value="1"/>
</dbReference>
<dbReference type="Gene3D" id="2.70.98.90">
    <property type="match status" value="1"/>
</dbReference>
<dbReference type="HAMAP" id="MF_01810">
    <property type="entry name" value="YidC_type1"/>
    <property type="match status" value="1"/>
</dbReference>
<dbReference type="InterPro" id="IPR019998">
    <property type="entry name" value="Membr_insert_YidC"/>
</dbReference>
<dbReference type="InterPro" id="IPR028053">
    <property type="entry name" value="Membr_insert_YidC_N"/>
</dbReference>
<dbReference type="InterPro" id="IPR001708">
    <property type="entry name" value="YidC/ALB3/OXA1/COX18"/>
</dbReference>
<dbReference type="InterPro" id="IPR028055">
    <property type="entry name" value="YidC/Oxa/ALB_C"/>
</dbReference>
<dbReference type="InterPro" id="IPR047196">
    <property type="entry name" value="YidC_ALB_C"/>
</dbReference>
<dbReference type="InterPro" id="IPR038221">
    <property type="entry name" value="YidC_periplasmic_sf"/>
</dbReference>
<dbReference type="NCBIfam" id="NF002351">
    <property type="entry name" value="PRK01318.1-1"/>
    <property type="match status" value="1"/>
</dbReference>
<dbReference type="NCBIfam" id="NF002352">
    <property type="entry name" value="PRK01318.1-3"/>
    <property type="match status" value="1"/>
</dbReference>
<dbReference type="NCBIfam" id="TIGR03593">
    <property type="entry name" value="yidC_nterm"/>
    <property type="match status" value="1"/>
</dbReference>
<dbReference type="NCBIfam" id="TIGR03592">
    <property type="entry name" value="yidC_oxa1_cterm"/>
    <property type="match status" value="1"/>
</dbReference>
<dbReference type="PANTHER" id="PTHR12428:SF65">
    <property type="entry name" value="CYTOCHROME C OXIDASE ASSEMBLY PROTEIN COX18, MITOCHONDRIAL"/>
    <property type="match status" value="1"/>
</dbReference>
<dbReference type="PANTHER" id="PTHR12428">
    <property type="entry name" value="OXA1"/>
    <property type="match status" value="1"/>
</dbReference>
<dbReference type="Pfam" id="PF02096">
    <property type="entry name" value="60KD_IMP"/>
    <property type="match status" value="1"/>
</dbReference>
<dbReference type="Pfam" id="PF14849">
    <property type="entry name" value="YidC_periplas"/>
    <property type="match status" value="1"/>
</dbReference>
<dbReference type="PRINTS" id="PR00701">
    <property type="entry name" value="60KDINNERMP"/>
</dbReference>
<dbReference type="PRINTS" id="PR01900">
    <property type="entry name" value="YIDCPROTEIN"/>
</dbReference>
<evidence type="ECO:0000255" key="1">
    <source>
        <dbReference type="HAMAP-Rule" id="MF_01810"/>
    </source>
</evidence>
<evidence type="ECO:0000256" key="2">
    <source>
        <dbReference type="SAM" id="MobiDB-lite"/>
    </source>
</evidence>
<comment type="function">
    <text evidence="1">Required for the insertion and/or proper folding and/or complex formation of integral membrane proteins into the membrane. Involved in integration of membrane proteins that insert both dependently and independently of the Sec translocase complex, as well as at least some lipoproteins. Aids folding of multispanning membrane proteins.</text>
</comment>
<comment type="subunit">
    <text evidence="1">Interacts with the Sec translocase complex via SecD. Specifically interacts with transmembrane segments of nascent integral membrane proteins during membrane integration.</text>
</comment>
<comment type="subcellular location">
    <subcellularLocation>
        <location evidence="1">Cell inner membrane</location>
        <topology evidence="1">Multi-pass membrane protein</topology>
    </subcellularLocation>
</comment>
<comment type="similarity">
    <text evidence="1">Belongs to the OXA1/ALB3/YidC family. Type 1 subfamily.</text>
</comment>
<feature type="chain" id="PRO_1000187714" description="Membrane protein insertase YidC">
    <location>
        <begin position="1"/>
        <end position="539"/>
    </location>
</feature>
<feature type="transmembrane region" description="Helical" evidence="1">
    <location>
        <begin position="6"/>
        <end position="26"/>
    </location>
</feature>
<feature type="transmembrane region" description="Helical" evidence="1">
    <location>
        <begin position="341"/>
        <end position="361"/>
    </location>
</feature>
<feature type="transmembrane region" description="Helical" evidence="1">
    <location>
        <begin position="416"/>
        <end position="436"/>
    </location>
</feature>
<feature type="transmembrane region" description="Helical" evidence="1">
    <location>
        <begin position="454"/>
        <end position="474"/>
    </location>
</feature>
<feature type="transmembrane region" description="Helical" evidence="1">
    <location>
        <begin position="495"/>
        <end position="515"/>
    </location>
</feature>
<feature type="region of interest" description="Disordered" evidence="2">
    <location>
        <begin position="35"/>
        <end position="55"/>
    </location>
</feature>
<feature type="compositionally biased region" description="Polar residues" evidence="2">
    <location>
        <begin position="35"/>
        <end position="44"/>
    </location>
</feature>
<reference key="1">
    <citation type="submission" date="2009-02" db="EMBL/GenBank/DDBJ databases">
        <title>Vibrio splendidus str. LGP32 complete genome.</title>
        <authorList>
            <person name="Mazel D."/>
            <person name="Le Roux F."/>
        </authorList>
    </citation>
    <scope>NUCLEOTIDE SEQUENCE [LARGE SCALE GENOMIC DNA]</scope>
    <source>
        <strain>LGP32</strain>
    </source>
</reference>
<keyword id="KW-0997">Cell inner membrane</keyword>
<keyword id="KW-1003">Cell membrane</keyword>
<keyword id="KW-0143">Chaperone</keyword>
<keyword id="KW-0472">Membrane</keyword>
<keyword id="KW-0653">Protein transport</keyword>
<keyword id="KW-0812">Transmembrane</keyword>
<keyword id="KW-1133">Transmembrane helix</keyword>
<keyword id="KW-0813">Transport</keyword>
<name>YIDC_VIBA3</name>
<protein>
    <recommendedName>
        <fullName evidence="1">Membrane protein insertase YidC</fullName>
    </recommendedName>
    <alternativeName>
        <fullName evidence="1">Foldase YidC</fullName>
    </alternativeName>
    <alternativeName>
        <fullName evidence="1">Membrane integrase YidC</fullName>
    </alternativeName>
    <alternativeName>
        <fullName evidence="1">Membrane protein YidC</fullName>
    </alternativeName>
</protein>
<sequence>MDSQRNILLIALALVSFLLFQQWNVAQNPAPQAVEQAQSGSTLPAPSYADDLDPAPGQVASAKTITVTTDVLTLSIDTVGGDVVTANLNDYSAEFDSEDTFVLLKNEPGHQFIAQSGLVGPQGIDLSSTNRPSYTVSADSFTLAEGQDELRIPMTYQANGLDYTKTFVLKRGSYAIDVEYDVVNNSGNNATFGMYAHLRQNVMDDGGSLTMPTYRGGAYSTEDTRYKKYSFDDMQDRNLSLNLANGQGWAAMIQHYFASAWIPRDEAGSNLYTRVIGNLGDIGVRMPNKTIATGDEASFKATLWVGPKLQDQMAAVAPNLDLVVDYGWLWFIAKPLHTLLSFIQGIVVNWGLAIICLTFIVRGAMYPLTKAQYTSMAKMRMLQPKLTAMRERIGDDRQRMSQEMMELYKKEKVNPLGGCLPILLQMPIFISLYWALMESVELRHSPFFGWITDLSAQDPYYILPLLMGASMFLIQKMSPTTVTDPMQQKIMTFMPVMFTFFFLFFPSGLVLYWLVSNIVTLIQQTLIYRALEKKGLHSK</sequence>
<organism>
    <name type="scientific">Vibrio atlanticus (strain LGP32)</name>
    <name type="common">Vibrio splendidus (strain Mel32)</name>
    <dbReference type="NCBI Taxonomy" id="575788"/>
    <lineage>
        <taxon>Bacteria</taxon>
        <taxon>Pseudomonadati</taxon>
        <taxon>Pseudomonadota</taxon>
        <taxon>Gammaproteobacteria</taxon>
        <taxon>Vibrionales</taxon>
        <taxon>Vibrionaceae</taxon>
        <taxon>Vibrio</taxon>
    </lineage>
</organism>